<gene>
    <name type="primary">LOG2</name>
    <name type="synonym">RF215</name>
    <name type="synonym">RIG2</name>
    <name type="ordered locus">At3g09770</name>
    <name type="ORF">F11F8.36</name>
    <name type="ORF">F8A24.18</name>
</gene>
<name>LOFG2_ARATH</name>
<keyword id="KW-0025">Alternative splicing</keyword>
<keyword id="KW-1003">Cell membrane</keyword>
<keyword id="KW-0449">Lipoprotein</keyword>
<keyword id="KW-0472">Membrane</keyword>
<keyword id="KW-0479">Metal-binding</keyword>
<keyword id="KW-0519">Myristate</keyword>
<keyword id="KW-1185">Reference proteome</keyword>
<keyword id="KW-0808">Transferase</keyword>
<keyword id="KW-0833">Ubl conjugation pathway</keyword>
<keyword id="KW-0862">Zinc</keyword>
<keyword id="KW-0863">Zinc-finger</keyword>
<proteinExistence type="evidence at protein level"/>
<feature type="initiator methionine" description="Removed" evidence="5">
    <location>
        <position position="1"/>
    </location>
</feature>
<feature type="chain" id="PRO_0000419946" description="Probable E3 ubiquitin-protein ligase LOG2">
    <location>
        <begin position="2"/>
        <end position="388"/>
    </location>
</feature>
<feature type="zinc finger region" description="RING-type; atypical" evidence="2">
    <location>
        <begin position="319"/>
        <end position="358"/>
    </location>
</feature>
<feature type="region of interest" description="Disordered" evidence="3">
    <location>
        <begin position="1"/>
        <end position="43"/>
    </location>
</feature>
<feature type="region of interest" description="DAR2 domain">
    <location>
        <begin position="159"/>
        <end position="281"/>
    </location>
</feature>
<feature type="region of interest" description="Disordered" evidence="3">
    <location>
        <begin position="368"/>
        <end position="388"/>
    </location>
</feature>
<feature type="compositionally biased region" description="Pro residues" evidence="3">
    <location>
        <begin position="22"/>
        <end position="40"/>
    </location>
</feature>
<feature type="lipid moiety-binding region" description="N-myristoyl glycine" evidence="5">
    <location>
        <position position="2"/>
    </location>
</feature>
<feature type="mutagenesis site" description="Abolishes myristoylation and plasma membrane localization." evidence="5">
    <original>G</original>
    <variation>A</variation>
    <location>
        <position position="2"/>
    </location>
</feature>
<feature type="mutagenesis site" description="Reduces E3 ligase activity." evidence="5">
    <original>I</original>
    <variation>A</variation>
    <location>
        <position position="321"/>
    </location>
</feature>
<feature type="mutagenesis site" description="Abolishes E3 ligase activity; in association with Ala-357." evidence="5">
    <original>C</original>
    <variation>A</variation>
    <location>
        <position position="354"/>
    </location>
</feature>
<feature type="mutagenesis site" description="Abolishes E3 ligase activity; in association with Ala-354." evidence="5">
    <original>C</original>
    <variation>A</variation>
    <location>
        <position position="357"/>
    </location>
</feature>
<evidence type="ECO:0000250" key="1"/>
<evidence type="ECO:0000255" key="2">
    <source>
        <dbReference type="PROSITE-ProRule" id="PRU00175"/>
    </source>
</evidence>
<evidence type="ECO:0000256" key="3">
    <source>
        <dbReference type="SAM" id="MobiDB-lite"/>
    </source>
</evidence>
<evidence type="ECO:0000269" key="4">
    <source>
    </source>
</evidence>
<evidence type="ECO:0000269" key="5">
    <source>
    </source>
</evidence>
<evidence type="ECO:0000305" key="6"/>
<dbReference type="EC" id="2.3.2.27"/>
<dbReference type="EMBL" id="AC015985">
    <property type="protein sequence ID" value="AAF23258.1"/>
    <property type="molecule type" value="Genomic_DNA"/>
</dbReference>
<dbReference type="EMBL" id="AC016661">
    <property type="protein sequence ID" value="AAF23312.1"/>
    <property type="molecule type" value="Genomic_DNA"/>
</dbReference>
<dbReference type="EMBL" id="CP002686">
    <property type="protein sequence ID" value="AEE74810.1"/>
    <property type="molecule type" value="Genomic_DNA"/>
</dbReference>
<dbReference type="EMBL" id="AY074275">
    <property type="protein sequence ID" value="AAL66972.1"/>
    <property type="molecule type" value="mRNA"/>
</dbReference>
<dbReference type="EMBL" id="AY087831">
    <property type="protein sequence ID" value="AAM65384.1"/>
    <property type="molecule type" value="mRNA"/>
</dbReference>
<dbReference type="RefSeq" id="NP_566356.1">
    <molecule id="Q9S752-1"/>
    <property type="nucleotide sequence ID" value="NM_111812.4"/>
</dbReference>
<dbReference type="BioGRID" id="5469">
    <property type="interactions" value="17"/>
</dbReference>
<dbReference type="FunCoup" id="Q9S752">
    <property type="interactions" value="1532"/>
</dbReference>
<dbReference type="IntAct" id="Q9S752">
    <property type="interactions" value="16"/>
</dbReference>
<dbReference type="MINT" id="Q9S752"/>
<dbReference type="STRING" id="3702.Q9S752"/>
<dbReference type="iPTMnet" id="Q9S752"/>
<dbReference type="PaxDb" id="3702-AT3G09770.1"/>
<dbReference type="ProteomicsDB" id="238471">
    <molecule id="Q9S752-1"/>
</dbReference>
<dbReference type="EnsemblPlants" id="AT3G09770.1">
    <molecule id="Q9S752-1"/>
    <property type="protein sequence ID" value="AT3G09770.1"/>
    <property type="gene ID" value="AT3G09770"/>
</dbReference>
<dbReference type="GeneID" id="820135"/>
<dbReference type="Gramene" id="AT3G09770.1">
    <molecule id="Q9S752-1"/>
    <property type="protein sequence ID" value="AT3G09770.1"/>
    <property type="gene ID" value="AT3G09770"/>
</dbReference>
<dbReference type="KEGG" id="ath:AT3G09770"/>
<dbReference type="Araport" id="AT3G09770"/>
<dbReference type="TAIR" id="AT3G09770">
    <property type="gene designation" value="LOG2"/>
</dbReference>
<dbReference type="eggNOG" id="KOG4265">
    <property type="taxonomic scope" value="Eukaryota"/>
</dbReference>
<dbReference type="HOGENOM" id="CLU_016631_0_0_1"/>
<dbReference type="InParanoid" id="Q9S752"/>
<dbReference type="OMA" id="FCCKEEF"/>
<dbReference type="OrthoDB" id="1711136at2759"/>
<dbReference type="PhylomeDB" id="Q9S752"/>
<dbReference type="BRENDA" id="2.3.2.27">
    <property type="organism ID" value="399"/>
</dbReference>
<dbReference type="UniPathway" id="UPA00143"/>
<dbReference type="PRO" id="PR:Q9S752"/>
<dbReference type="Proteomes" id="UP000006548">
    <property type="component" value="Chromosome 3"/>
</dbReference>
<dbReference type="ExpressionAtlas" id="Q9S752">
    <property type="expression patterns" value="baseline and differential"/>
</dbReference>
<dbReference type="GO" id="GO:0005886">
    <property type="term" value="C:plasma membrane"/>
    <property type="evidence" value="ECO:0000314"/>
    <property type="project" value="UniProtKB"/>
</dbReference>
<dbReference type="GO" id="GO:0061630">
    <property type="term" value="F:ubiquitin protein ligase activity"/>
    <property type="evidence" value="ECO:0007669"/>
    <property type="project" value="InterPro"/>
</dbReference>
<dbReference type="GO" id="GO:0004842">
    <property type="term" value="F:ubiquitin-protein transferase activity"/>
    <property type="evidence" value="ECO:0000314"/>
    <property type="project" value="TAIR"/>
</dbReference>
<dbReference type="GO" id="GO:0008270">
    <property type="term" value="F:zinc ion binding"/>
    <property type="evidence" value="ECO:0007669"/>
    <property type="project" value="UniProtKB-KW"/>
</dbReference>
<dbReference type="GO" id="GO:0080144">
    <property type="term" value="P:intracellular amino acid homeostasis"/>
    <property type="evidence" value="ECO:0000316"/>
    <property type="project" value="UniProtKB"/>
</dbReference>
<dbReference type="GO" id="GO:0016567">
    <property type="term" value="P:protein ubiquitination"/>
    <property type="evidence" value="ECO:0007669"/>
    <property type="project" value="UniProtKB-UniPathway"/>
</dbReference>
<dbReference type="GO" id="GO:0090333">
    <property type="term" value="P:regulation of stomatal closure"/>
    <property type="evidence" value="ECO:0000315"/>
    <property type="project" value="CACAO"/>
</dbReference>
<dbReference type="GO" id="GO:0009737">
    <property type="term" value="P:response to abscisic acid"/>
    <property type="evidence" value="ECO:0000315"/>
    <property type="project" value="CACAO"/>
</dbReference>
<dbReference type="CDD" id="cd16789">
    <property type="entry name" value="mRING-HC-C3HC5_MGRN1-like"/>
    <property type="match status" value="1"/>
</dbReference>
<dbReference type="FunFam" id="3.30.40.10:FF:000115">
    <property type="entry name" value="probable E3 ubiquitin-protein ligase LOG2"/>
    <property type="match status" value="1"/>
</dbReference>
<dbReference type="Gene3D" id="3.30.40.10">
    <property type="entry name" value="Zinc/RING finger domain, C3HC4 (zinc finger)"/>
    <property type="match status" value="1"/>
</dbReference>
<dbReference type="InterPro" id="IPR045195">
    <property type="entry name" value="LOG2-like_mRING_C3HC5"/>
</dbReference>
<dbReference type="InterPro" id="IPR045194">
    <property type="entry name" value="MGRN1/RNF157-like"/>
</dbReference>
<dbReference type="InterPro" id="IPR001841">
    <property type="entry name" value="Znf_RING"/>
</dbReference>
<dbReference type="InterPro" id="IPR013083">
    <property type="entry name" value="Znf_RING/FYVE/PHD"/>
</dbReference>
<dbReference type="PANTHER" id="PTHR22996">
    <property type="entry name" value="MAHOGUNIN"/>
    <property type="match status" value="1"/>
</dbReference>
<dbReference type="PANTHER" id="PTHR22996:SF0">
    <property type="entry name" value="RE60872P-RELATED"/>
    <property type="match status" value="1"/>
</dbReference>
<dbReference type="Pfam" id="PF13920">
    <property type="entry name" value="zf-C3HC4_3"/>
    <property type="match status" value="1"/>
</dbReference>
<dbReference type="SMART" id="SM00184">
    <property type="entry name" value="RING"/>
    <property type="match status" value="1"/>
</dbReference>
<dbReference type="SUPFAM" id="SSF57850">
    <property type="entry name" value="RING/U-box"/>
    <property type="match status" value="1"/>
</dbReference>
<dbReference type="PROSITE" id="PS50089">
    <property type="entry name" value="ZF_RING_2"/>
    <property type="match status" value="1"/>
</dbReference>
<accession>Q9S752</accession>
<organism>
    <name type="scientific">Arabidopsis thaliana</name>
    <name type="common">Mouse-ear cress</name>
    <dbReference type="NCBI Taxonomy" id="3702"/>
    <lineage>
        <taxon>Eukaryota</taxon>
        <taxon>Viridiplantae</taxon>
        <taxon>Streptophyta</taxon>
        <taxon>Embryophyta</taxon>
        <taxon>Tracheophyta</taxon>
        <taxon>Spermatophyta</taxon>
        <taxon>Magnoliopsida</taxon>
        <taxon>eudicotyledons</taxon>
        <taxon>Gunneridae</taxon>
        <taxon>Pentapetalae</taxon>
        <taxon>rosids</taxon>
        <taxon>malvids</taxon>
        <taxon>Brassicales</taxon>
        <taxon>Brassicaceae</taxon>
        <taxon>Camelineae</taxon>
        <taxon>Arabidopsis</taxon>
    </lineage>
</organism>
<sequence length="388" mass="42848">MGNISSSGGEGRRRRRRNHTAAPPPPPPPPSSSLPPPPLPTEIQANPIVFAAVTPYPNPNPNPVYQYPASYYHHPPPGAMPLPPYDHHLQHHPPHPYHNHSWAPVAMARYPYAGHMMAQPTPYVEHQKAVTIRNDVNLKKESLRLEPDPDNPGRFLVSFTFDATVSGRISVIFFAKESEDCKLTATKEDILPPITLDFEKGLGQKFKQSSGSGIDFSVFEDVELFKAAADTEIYPLAVKAEAAPSGGENEEEERSGSKNAQITQAVYEKDKGEIKIRVVKQILWVNGTRYELQEIYGIGNTVEGDDDSADDANDPGKECVICLSEPRDTTVLPCRHMCMCSGCAKVLRFQTNRCPICRQPVERLLEIKVHGNNGSGNNTGQGETVEQE</sequence>
<reference key="1">
    <citation type="journal article" date="2000" name="Nature">
        <title>Sequence and analysis of chromosome 3 of the plant Arabidopsis thaliana.</title>
        <authorList>
            <person name="Salanoubat M."/>
            <person name="Lemcke K."/>
            <person name="Rieger M."/>
            <person name="Ansorge W."/>
            <person name="Unseld M."/>
            <person name="Fartmann B."/>
            <person name="Valle G."/>
            <person name="Bloecker H."/>
            <person name="Perez-Alonso M."/>
            <person name="Obermaier B."/>
            <person name="Delseny M."/>
            <person name="Boutry M."/>
            <person name="Grivell L.A."/>
            <person name="Mache R."/>
            <person name="Puigdomenech P."/>
            <person name="De Simone V."/>
            <person name="Choisne N."/>
            <person name="Artiguenave F."/>
            <person name="Robert C."/>
            <person name="Brottier P."/>
            <person name="Wincker P."/>
            <person name="Cattolico L."/>
            <person name="Weissenbach J."/>
            <person name="Saurin W."/>
            <person name="Quetier F."/>
            <person name="Schaefer M."/>
            <person name="Mueller-Auer S."/>
            <person name="Gabel C."/>
            <person name="Fuchs M."/>
            <person name="Benes V."/>
            <person name="Wurmbach E."/>
            <person name="Drzonek H."/>
            <person name="Erfle H."/>
            <person name="Jordan N."/>
            <person name="Bangert S."/>
            <person name="Wiedelmann R."/>
            <person name="Kranz H."/>
            <person name="Voss H."/>
            <person name="Holland R."/>
            <person name="Brandt P."/>
            <person name="Nyakatura G."/>
            <person name="Vezzi A."/>
            <person name="D'Angelo M."/>
            <person name="Pallavicini A."/>
            <person name="Toppo S."/>
            <person name="Simionati B."/>
            <person name="Conrad A."/>
            <person name="Hornischer K."/>
            <person name="Kauer G."/>
            <person name="Loehnert T.-H."/>
            <person name="Nordsiek G."/>
            <person name="Reichelt J."/>
            <person name="Scharfe M."/>
            <person name="Schoen O."/>
            <person name="Bargues M."/>
            <person name="Terol J."/>
            <person name="Climent J."/>
            <person name="Navarro P."/>
            <person name="Collado C."/>
            <person name="Perez-Perez A."/>
            <person name="Ottenwaelder B."/>
            <person name="Duchemin D."/>
            <person name="Cooke R."/>
            <person name="Laudie M."/>
            <person name="Berger-Llauro C."/>
            <person name="Purnelle B."/>
            <person name="Masuy D."/>
            <person name="de Haan M."/>
            <person name="Maarse A.C."/>
            <person name="Alcaraz J.-P."/>
            <person name="Cottet A."/>
            <person name="Casacuberta E."/>
            <person name="Monfort A."/>
            <person name="Argiriou A."/>
            <person name="Flores M."/>
            <person name="Liguori R."/>
            <person name="Vitale D."/>
            <person name="Mannhaupt G."/>
            <person name="Haase D."/>
            <person name="Schoof H."/>
            <person name="Rudd S."/>
            <person name="Zaccaria P."/>
            <person name="Mewes H.-W."/>
            <person name="Mayer K.F.X."/>
            <person name="Kaul S."/>
            <person name="Town C.D."/>
            <person name="Koo H.L."/>
            <person name="Tallon L.J."/>
            <person name="Jenkins J."/>
            <person name="Rooney T."/>
            <person name="Rizzo M."/>
            <person name="Walts A."/>
            <person name="Utterback T."/>
            <person name="Fujii C.Y."/>
            <person name="Shea T.P."/>
            <person name="Creasy T.H."/>
            <person name="Haas B."/>
            <person name="Maiti R."/>
            <person name="Wu D."/>
            <person name="Peterson J."/>
            <person name="Van Aken S."/>
            <person name="Pai G."/>
            <person name="Militscher J."/>
            <person name="Sellers P."/>
            <person name="Gill J.E."/>
            <person name="Feldblyum T.V."/>
            <person name="Preuss D."/>
            <person name="Lin X."/>
            <person name="Nierman W.C."/>
            <person name="Salzberg S.L."/>
            <person name="White O."/>
            <person name="Venter J.C."/>
            <person name="Fraser C.M."/>
            <person name="Kaneko T."/>
            <person name="Nakamura Y."/>
            <person name="Sato S."/>
            <person name="Kato T."/>
            <person name="Asamizu E."/>
            <person name="Sasamoto S."/>
            <person name="Kimura T."/>
            <person name="Idesawa K."/>
            <person name="Kawashima K."/>
            <person name="Kishida Y."/>
            <person name="Kiyokawa C."/>
            <person name="Kohara M."/>
            <person name="Matsumoto M."/>
            <person name="Matsuno A."/>
            <person name="Muraki A."/>
            <person name="Nakayama S."/>
            <person name="Nakazaki N."/>
            <person name="Shinpo S."/>
            <person name="Takeuchi C."/>
            <person name="Wada T."/>
            <person name="Watanabe A."/>
            <person name="Yamada M."/>
            <person name="Yasuda M."/>
            <person name="Tabata S."/>
        </authorList>
    </citation>
    <scope>NUCLEOTIDE SEQUENCE [LARGE SCALE GENOMIC DNA]</scope>
    <source>
        <strain>cv. Columbia</strain>
    </source>
</reference>
<reference key="2">
    <citation type="journal article" date="2017" name="Plant J.">
        <title>Araport11: a complete reannotation of the Arabidopsis thaliana reference genome.</title>
        <authorList>
            <person name="Cheng C.Y."/>
            <person name="Krishnakumar V."/>
            <person name="Chan A.P."/>
            <person name="Thibaud-Nissen F."/>
            <person name="Schobel S."/>
            <person name="Town C.D."/>
        </authorList>
    </citation>
    <scope>GENOME REANNOTATION</scope>
    <source>
        <strain>cv. Columbia</strain>
    </source>
</reference>
<reference key="3">
    <citation type="journal article" date="2003" name="Science">
        <title>Empirical analysis of transcriptional activity in the Arabidopsis genome.</title>
        <authorList>
            <person name="Yamada K."/>
            <person name="Lim J."/>
            <person name="Dale J.M."/>
            <person name="Chen H."/>
            <person name="Shinn P."/>
            <person name="Palm C.J."/>
            <person name="Southwick A.M."/>
            <person name="Wu H.C."/>
            <person name="Kim C.J."/>
            <person name="Nguyen M."/>
            <person name="Pham P.K."/>
            <person name="Cheuk R.F."/>
            <person name="Karlin-Newmann G."/>
            <person name="Liu S.X."/>
            <person name="Lam B."/>
            <person name="Sakano H."/>
            <person name="Wu T."/>
            <person name="Yu G."/>
            <person name="Miranda M."/>
            <person name="Quach H.L."/>
            <person name="Tripp M."/>
            <person name="Chang C.H."/>
            <person name="Lee J.M."/>
            <person name="Toriumi M.J."/>
            <person name="Chan M.M."/>
            <person name="Tang C.C."/>
            <person name="Onodera C.S."/>
            <person name="Deng J.M."/>
            <person name="Akiyama K."/>
            <person name="Ansari Y."/>
            <person name="Arakawa T."/>
            <person name="Banh J."/>
            <person name="Banno F."/>
            <person name="Bowser L."/>
            <person name="Brooks S.Y."/>
            <person name="Carninci P."/>
            <person name="Chao Q."/>
            <person name="Choy N."/>
            <person name="Enju A."/>
            <person name="Goldsmith A.D."/>
            <person name="Gurjal M."/>
            <person name="Hansen N.F."/>
            <person name="Hayashizaki Y."/>
            <person name="Johnson-Hopson C."/>
            <person name="Hsuan V.W."/>
            <person name="Iida K."/>
            <person name="Karnes M."/>
            <person name="Khan S."/>
            <person name="Koesema E."/>
            <person name="Ishida J."/>
            <person name="Jiang P.X."/>
            <person name="Jones T."/>
            <person name="Kawai J."/>
            <person name="Kamiya A."/>
            <person name="Meyers C."/>
            <person name="Nakajima M."/>
            <person name="Narusaka M."/>
            <person name="Seki M."/>
            <person name="Sakurai T."/>
            <person name="Satou M."/>
            <person name="Tamse R."/>
            <person name="Vaysberg M."/>
            <person name="Wallender E.K."/>
            <person name="Wong C."/>
            <person name="Yamamura Y."/>
            <person name="Yuan S."/>
            <person name="Shinozaki K."/>
            <person name="Davis R.W."/>
            <person name="Theologis A."/>
            <person name="Ecker J.R."/>
        </authorList>
    </citation>
    <scope>NUCLEOTIDE SEQUENCE [LARGE SCALE MRNA]</scope>
    <source>
        <strain>cv. Columbia</strain>
    </source>
</reference>
<reference key="4">
    <citation type="submission" date="2002-03" db="EMBL/GenBank/DDBJ databases">
        <title>Full-length cDNA from Arabidopsis thaliana.</title>
        <authorList>
            <person name="Brover V.V."/>
            <person name="Troukhan M.E."/>
            <person name="Alexandrov N.A."/>
            <person name="Lu Y.-P."/>
            <person name="Flavell R.B."/>
            <person name="Feldmann K.A."/>
        </authorList>
    </citation>
    <scope>NUCLEOTIDE SEQUENCE [LARGE SCALE MRNA]</scope>
</reference>
<reference key="5">
    <citation type="journal article" date="2002" name="Genome Biol.">
        <title>Evaluation and classification of RING-finger domains encoded by the Arabidopsis genome.</title>
        <authorList>
            <person name="Kosarev P."/>
            <person name="Mayer K.F.X."/>
            <person name="Hardtke C.S."/>
        </authorList>
    </citation>
    <scope>GENE FAMILY ORGANIZATION</scope>
</reference>
<reference key="6">
    <citation type="journal article" date="2005" name="Plant Physiol.">
        <title>Functional analysis of the RING-type ubiquitin ligase family of Arabidopsis.</title>
        <authorList>
            <person name="Stone S.L."/>
            <person name="Hauksdottir H."/>
            <person name="Troy A."/>
            <person name="Herschleb J."/>
            <person name="Kraft E."/>
            <person name="Callis J."/>
        </authorList>
    </citation>
    <scope>FUNCTION</scope>
    <scope>DOMAIN</scope>
</reference>
<reference key="7">
    <citation type="journal article" date="2012" name="Plant Physiol.">
        <title>The ubiquitin E3 ligase LOSS OF GDU2 is required for GLUTAMINE DUMPER1-induced amino acid secretion in Arabidopsis.</title>
        <authorList>
            <person name="Pratelli R."/>
            <person name="Guerra D.D."/>
            <person name="Yu S."/>
            <person name="Wogulis M."/>
            <person name="Kraft E."/>
            <person name="Frommer W.B."/>
            <person name="Callis J."/>
            <person name="Pilot G."/>
        </authorList>
    </citation>
    <scope>GENE SUBFAMILY</scope>
    <scope>INTERACTION WITH GDU1</scope>
    <scope>FUNCTION</scope>
    <scope>TISSUE SPECIFICITY</scope>
    <scope>MUTAGENESIS OF GLY-2; ILE-321; CYS-354 AND CYS-357</scope>
    <scope>SUBCELLULAR LOCATION</scope>
    <scope>MYRISTOYLATION AT GLY-2</scope>
    <scope>DISRUPTION PHENOTYPE</scope>
</reference>
<protein>
    <recommendedName>
        <fullName>Probable E3 ubiquitin-protein ligase LOG2</fullName>
        <ecNumber>2.3.2.27</ecNumber>
    </recommendedName>
    <alternativeName>
        <fullName evidence="6">Probable RING-type E3 ubiquitin transferase LOG2</fullName>
    </alternativeName>
    <alternativeName>
        <fullName>Protein LOSS OF GDU2</fullName>
    </alternativeName>
    <alternativeName>
        <fullName>RING finger protein 215</fullName>
    </alternativeName>
</protein>
<comment type="function">
    <text evidence="4 5">Acts as an E3 ubiquitin-protein ligase, or as part of E3 complex, which accepts ubiquitin from specific E2 ubiquitin-conjugating enzymes and then transfers it to substrates (in vitro). Required for GLUTAMINE DUMPER 1(GDU1)-induced amino acid secretion and for amino acid homeostasis. Ubiquitinates GDU1 (in vitro).</text>
</comment>
<comment type="catalytic activity">
    <reaction>
        <text>S-ubiquitinyl-[E2 ubiquitin-conjugating enzyme]-L-cysteine + [acceptor protein]-L-lysine = [E2 ubiquitin-conjugating enzyme]-L-cysteine + N(6)-ubiquitinyl-[acceptor protein]-L-lysine.</text>
        <dbReference type="EC" id="2.3.2.27"/>
    </reaction>
</comment>
<comment type="pathway">
    <text>Protein modification; protein ubiquitination.</text>
</comment>
<comment type="subunit">
    <text evidence="5">Interacts with GDU1.</text>
</comment>
<comment type="interaction">
    <interactant intactId="EBI-6290644">
        <id>Q9S752</id>
    </interactant>
    <interactant intactId="EBI-6290661">
        <id>O81775</id>
        <label>GDU1</label>
    </interactant>
    <organismsDiffer>false</organismsDiffer>
    <experiments>15</experiments>
</comment>
<comment type="subcellular location">
    <subcellularLocation>
        <location evidence="5">Cell membrane</location>
    </subcellularLocation>
</comment>
<comment type="alternative products">
    <event type="alternative splicing"/>
    <isoform>
        <id>Q9S752-1</id>
        <name>1</name>
        <sequence type="displayed"/>
    </isoform>
    <text>A number of isoforms are produced. According to EST sequences.</text>
</comment>
<comment type="tissue specificity">
    <text evidence="5">Expressed in the vascular tissues in both phloem and xylem parenchyma cells.</text>
</comment>
<comment type="domain">
    <text evidence="1">The RING-type zinc finger domain mediates binding to an E2 ubiquitin-conjugating enzyme.</text>
</comment>
<comment type="PTM">
    <text evidence="5">Myristoylated (in vitro).</text>
</comment>
<comment type="disruption phenotype">
    <text evidence="5">No visible phenotype.</text>
</comment>
<comment type="similarity">
    <text evidence="6">Belongs to the RING-type zinc finger family. LOG2 subfamily.</text>
</comment>